<evidence type="ECO:0000255" key="1">
    <source>
        <dbReference type="HAMAP-Rule" id="MF_00110"/>
    </source>
</evidence>
<gene>
    <name evidence="1" type="primary">aroB</name>
    <name type="ordered locus">JJD26997_0781</name>
</gene>
<sequence>MQVEVKLKENAYKVYIDELEELEFDTKVFILSNPKISGLHLKTLLSKIKAKEISIATVKDGEEYKNLSTMEEILSQMFNSKLDRKSVLISFGGGVISDMGGFAASIYQRGIDFINIPTTLLACVDAAVGGKTGVNNNFGKNLIGTFYQPKAVYCESSFLKTLSSRELAAGMAEFIKMAAIFDDSMLDFIEKIDEKSFLNATCENEIFTQIIAKSIELKARVVEQDEKESGLRMLLNYGHTFAHVIENFTDYKLYLHGEAVAIGMVMANQLALNLGLLDKMQSQRIKDILLKFGLPISYKINSVDEFYEAFFMDKKSSNKKINFVLASPLGKGLIKGDISKEDIITTLREFQ</sequence>
<proteinExistence type="inferred from homology"/>
<accession>A7H333</accession>
<comment type="function">
    <text evidence="1">Catalyzes the conversion of 3-deoxy-D-arabino-heptulosonate 7-phosphate (DAHP) to dehydroquinate (DHQ).</text>
</comment>
<comment type="catalytic activity">
    <reaction evidence="1">
        <text>7-phospho-2-dehydro-3-deoxy-D-arabino-heptonate = 3-dehydroquinate + phosphate</text>
        <dbReference type="Rhea" id="RHEA:21968"/>
        <dbReference type="ChEBI" id="CHEBI:32364"/>
        <dbReference type="ChEBI" id="CHEBI:43474"/>
        <dbReference type="ChEBI" id="CHEBI:58394"/>
        <dbReference type="EC" id="4.2.3.4"/>
    </reaction>
</comment>
<comment type="cofactor">
    <cofactor evidence="1">
        <name>Co(2+)</name>
        <dbReference type="ChEBI" id="CHEBI:48828"/>
    </cofactor>
    <cofactor evidence="1">
        <name>Zn(2+)</name>
        <dbReference type="ChEBI" id="CHEBI:29105"/>
    </cofactor>
    <text evidence="1">Binds 1 divalent metal cation per subunit. Can use either Co(2+) or Zn(2+).</text>
</comment>
<comment type="cofactor">
    <cofactor evidence="1">
        <name>NAD(+)</name>
        <dbReference type="ChEBI" id="CHEBI:57540"/>
    </cofactor>
</comment>
<comment type="pathway">
    <text evidence="1">Metabolic intermediate biosynthesis; chorismate biosynthesis; chorismate from D-erythrose 4-phosphate and phosphoenolpyruvate: step 2/7.</text>
</comment>
<comment type="subcellular location">
    <subcellularLocation>
        <location evidence="1">Cytoplasm</location>
    </subcellularLocation>
</comment>
<comment type="similarity">
    <text evidence="1">Belongs to the sugar phosphate cyclases superfamily. Dehydroquinate synthase family.</text>
</comment>
<organism>
    <name type="scientific">Campylobacter jejuni subsp. doylei (strain ATCC BAA-1458 / RM4099 / 269.97)</name>
    <dbReference type="NCBI Taxonomy" id="360109"/>
    <lineage>
        <taxon>Bacteria</taxon>
        <taxon>Pseudomonadati</taxon>
        <taxon>Campylobacterota</taxon>
        <taxon>Epsilonproteobacteria</taxon>
        <taxon>Campylobacterales</taxon>
        <taxon>Campylobacteraceae</taxon>
        <taxon>Campylobacter</taxon>
    </lineage>
</organism>
<keyword id="KW-0028">Amino-acid biosynthesis</keyword>
<keyword id="KW-0057">Aromatic amino acid biosynthesis</keyword>
<keyword id="KW-0170">Cobalt</keyword>
<keyword id="KW-0963">Cytoplasm</keyword>
<keyword id="KW-0456">Lyase</keyword>
<keyword id="KW-0479">Metal-binding</keyword>
<keyword id="KW-0520">NAD</keyword>
<keyword id="KW-0547">Nucleotide-binding</keyword>
<keyword id="KW-0862">Zinc</keyword>
<dbReference type="EC" id="4.2.3.4" evidence="1"/>
<dbReference type="EMBL" id="CP000768">
    <property type="protein sequence ID" value="ABS43386.1"/>
    <property type="molecule type" value="Genomic_DNA"/>
</dbReference>
<dbReference type="SMR" id="A7H333"/>
<dbReference type="KEGG" id="cjd:JJD26997_0781"/>
<dbReference type="HOGENOM" id="CLU_001201_0_1_7"/>
<dbReference type="UniPathway" id="UPA00053">
    <property type="reaction ID" value="UER00085"/>
</dbReference>
<dbReference type="Proteomes" id="UP000002302">
    <property type="component" value="Chromosome"/>
</dbReference>
<dbReference type="GO" id="GO:0005737">
    <property type="term" value="C:cytoplasm"/>
    <property type="evidence" value="ECO:0007669"/>
    <property type="project" value="UniProtKB-SubCell"/>
</dbReference>
<dbReference type="GO" id="GO:0003856">
    <property type="term" value="F:3-dehydroquinate synthase activity"/>
    <property type="evidence" value="ECO:0007669"/>
    <property type="project" value="UniProtKB-UniRule"/>
</dbReference>
<dbReference type="GO" id="GO:0046872">
    <property type="term" value="F:metal ion binding"/>
    <property type="evidence" value="ECO:0007669"/>
    <property type="project" value="UniProtKB-KW"/>
</dbReference>
<dbReference type="GO" id="GO:0000166">
    <property type="term" value="F:nucleotide binding"/>
    <property type="evidence" value="ECO:0007669"/>
    <property type="project" value="UniProtKB-KW"/>
</dbReference>
<dbReference type="GO" id="GO:0008652">
    <property type="term" value="P:amino acid biosynthetic process"/>
    <property type="evidence" value="ECO:0007669"/>
    <property type="project" value="UniProtKB-KW"/>
</dbReference>
<dbReference type="GO" id="GO:0009073">
    <property type="term" value="P:aromatic amino acid family biosynthetic process"/>
    <property type="evidence" value="ECO:0007669"/>
    <property type="project" value="UniProtKB-KW"/>
</dbReference>
<dbReference type="GO" id="GO:0009423">
    <property type="term" value="P:chorismate biosynthetic process"/>
    <property type="evidence" value="ECO:0007669"/>
    <property type="project" value="UniProtKB-UniRule"/>
</dbReference>
<dbReference type="CDD" id="cd08195">
    <property type="entry name" value="DHQS"/>
    <property type="match status" value="1"/>
</dbReference>
<dbReference type="FunFam" id="3.40.50.1970:FF:000007">
    <property type="entry name" value="Pentafunctional AROM polypeptide"/>
    <property type="match status" value="1"/>
</dbReference>
<dbReference type="Gene3D" id="3.40.50.1970">
    <property type="match status" value="1"/>
</dbReference>
<dbReference type="Gene3D" id="1.20.1090.10">
    <property type="entry name" value="Dehydroquinate synthase-like - alpha domain"/>
    <property type="match status" value="1"/>
</dbReference>
<dbReference type="HAMAP" id="MF_00110">
    <property type="entry name" value="DHQ_synthase"/>
    <property type="match status" value="1"/>
</dbReference>
<dbReference type="InterPro" id="IPR050071">
    <property type="entry name" value="Dehydroquinate_synthase"/>
</dbReference>
<dbReference type="InterPro" id="IPR016037">
    <property type="entry name" value="DHQ_synth_AroB"/>
</dbReference>
<dbReference type="InterPro" id="IPR030963">
    <property type="entry name" value="DHQ_synth_fam"/>
</dbReference>
<dbReference type="InterPro" id="IPR030960">
    <property type="entry name" value="DHQS/DOIS_N"/>
</dbReference>
<dbReference type="InterPro" id="IPR056179">
    <property type="entry name" value="DHQS_C"/>
</dbReference>
<dbReference type="NCBIfam" id="TIGR01357">
    <property type="entry name" value="aroB"/>
    <property type="match status" value="1"/>
</dbReference>
<dbReference type="PANTHER" id="PTHR43622">
    <property type="entry name" value="3-DEHYDROQUINATE SYNTHASE"/>
    <property type="match status" value="1"/>
</dbReference>
<dbReference type="PANTHER" id="PTHR43622:SF7">
    <property type="entry name" value="3-DEHYDROQUINATE SYNTHASE, CHLOROPLASTIC"/>
    <property type="match status" value="1"/>
</dbReference>
<dbReference type="Pfam" id="PF01761">
    <property type="entry name" value="DHQ_synthase"/>
    <property type="match status" value="1"/>
</dbReference>
<dbReference type="Pfam" id="PF24621">
    <property type="entry name" value="DHQS_C"/>
    <property type="match status" value="1"/>
</dbReference>
<dbReference type="PIRSF" id="PIRSF001455">
    <property type="entry name" value="DHQ_synth"/>
    <property type="match status" value="1"/>
</dbReference>
<dbReference type="SUPFAM" id="SSF56796">
    <property type="entry name" value="Dehydroquinate synthase-like"/>
    <property type="match status" value="1"/>
</dbReference>
<name>AROB_CAMJD</name>
<reference key="1">
    <citation type="submission" date="2007-07" db="EMBL/GenBank/DDBJ databases">
        <title>Complete genome sequence of Campylobacter jejuni subsp doylei 269.97 isolated from human blood.</title>
        <authorList>
            <person name="Fouts D.E."/>
            <person name="Mongodin E.F."/>
            <person name="Puiu D."/>
            <person name="Sebastian Y."/>
            <person name="Miller W.G."/>
            <person name="Mandrell R.E."/>
            <person name="Lastovica A.J."/>
            <person name="Nelson K.E."/>
        </authorList>
    </citation>
    <scope>NUCLEOTIDE SEQUENCE [LARGE SCALE GENOMIC DNA]</scope>
    <source>
        <strain>ATCC BAA-1458 / RM4099 / 269.97</strain>
    </source>
</reference>
<protein>
    <recommendedName>
        <fullName evidence="1">3-dehydroquinate synthase</fullName>
        <shortName evidence="1">DHQS</shortName>
        <ecNumber evidence="1">4.2.3.4</ecNumber>
    </recommendedName>
</protein>
<feature type="chain" id="PRO_1000094482" description="3-dehydroquinate synthase">
    <location>
        <begin position="1"/>
        <end position="351"/>
    </location>
</feature>
<feature type="binding site" evidence="1">
    <location>
        <begin position="60"/>
        <end position="65"/>
    </location>
    <ligand>
        <name>NAD(+)</name>
        <dbReference type="ChEBI" id="CHEBI:57540"/>
    </ligand>
</feature>
<feature type="binding site" evidence="1">
    <location>
        <begin position="94"/>
        <end position="98"/>
    </location>
    <ligand>
        <name>NAD(+)</name>
        <dbReference type="ChEBI" id="CHEBI:57540"/>
    </ligand>
</feature>
<feature type="binding site" evidence="1">
    <location>
        <begin position="118"/>
        <end position="119"/>
    </location>
    <ligand>
        <name>NAD(+)</name>
        <dbReference type="ChEBI" id="CHEBI:57540"/>
    </ligand>
</feature>
<feature type="binding site" evidence="1">
    <location>
        <position position="131"/>
    </location>
    <ligand>
        <name>NAD(+)</name>
        <dbReference type="ChEBI" id="CHEBI:57540"/>
    </ligand>
</feature>
<feature type="binding site" evidence="1">
    <location>
        <position position="140"/>
    </location>
    <ligand>
        <name>NAD(+)</name>
        <dbReference type="ChEBI" id="CHEBI:57540"/>
    </ligand>
</feature>
<feature type="binding site" evidence="1">
    <location>
        <begin position="158"/>
        <end position="161"/>
    </location>
    <ligand>
        <name>NAD(+)</name>
        <dbReference type="ChEBI" id="CHEBI:57540"/>
    </ligand>
</feature>
<feature type="binding site" evidence="1">
    <location>
        <position position="173"/>
    </location>
    <ligand>
        <name>Zn(2+)</name>
        <dbReference type="ChEBI" id="CHEBI:29105"/>
    </ligand>
</feature>
<feature type="binding site" evidence="1">
    <location>
        <position position="239"/>
    </location>
    <ligand>
        <name>Zn(2+)</name>
        <dbReference type="ChEBI" id="CHEBI:29105"/>
    </ligand>
</feature>
<feature type="binding site" evidence="1">
    <location>
        <position position="256"/>
    </location>
    <ligand>
        <name>Zn(2+)</name>
        <dbReference type="ChEBI" id="CHEBI:29105"/>
    </ligand>
</feature>